<reference key="1">
    <citation type="journal article" date="1994" name="DNA Res.">
        <title>Prediction of the coding sequences of unidentified human genes. II. The coding sequences of 40 new genes (KIAA0041-KIAA0080) deduced by analysis of cDNA clones from human cell line KG-1.</title>
        <authorList>
            <person name="Nomura N."/>
            <person name="Nagase T."/>
            <person name="Miyajima N."/>
            <person name="Sazuka T."/>
            <person name="Tanaka A."/>
            <person name="Sato S."/>
            <person name="Seki N."/>
            <person name="Kawarabayasi Y."/>
            <person name="Ishikawa K."/>
            <person name="Tabata S."/>
        </authorList>
    </citation>
    <scope>NUCLEOTIDE SEQUENCE [LARGE SCALE MRNA] (ISOFORM 1)</scope>
    <source>
        <tissue>Bone marrow</tissue>
    </source>
</reference>
<reference key="2">
    <citation type="journal article" date="2004" name="Nat. Genet.">
        <title>Complete sequencing and characterization of 21,243 full-length human cDNAs.</title>
        <authorList>
            <person name="Ota T."/>
            <person name="Suzuki Y."/>
            <person name="Nishikawa T."/>
            <person name="Otsuki T."/>
            <person name="Sugiyama T."/>
            <person name="Irie R."/>
            <person name="Wakamatsu A."/>
            <person name="Hayashi K."/>
            <person name="Sato H."/>
            <person name="Nagai K."/>
            <person name="Kimura K."/>
            <person name="Makita H."/>
            <person name="Sekine M."/>
            <person name="Obayashi M."/>
            <person name="Nishi T."/>
            <person name="Shibahara T."/>
            <person name="Tanaka T."/>
            <person name="Ishii S."/>
            <person name="Yamamoto J."/>
            <person name="Saito K."/>
            <person name="Kawai Y."/>
            <person name="Isono Y."/>
            <person name="Nakamura Y."/>
            <person name="Nagahari K."/>
            <person name="Murakami K."/>
            <person name="Yasuda T."/>
            <person name="Iwayanagi T."/>
            <person name="Wagatsuma M."/>
            <person name="Shiratori A."/>
            <person name="Sudo H."/>
            <person name="Hosoiri T."/>
            <person name="Kaku Y."/>
            <person name="Kodaira H."/>
            <person name="Kondo H."/>
            <person name="Sugawara M."/>
            <person name="Takahashi M."/>
            <person name="Kanda K."/>
            <person name="Yokoi T."/>
            <person name="Furuya T."/>
            <person name="Kikkawa E."/>
            <person name="Omura Y."/>
            <person name="Abe K."/>
            <person name="Kamihara K."/>
            <person name="Katsuta N."/>
            <person name="Sato K."/>
            <person name="Tanikawa M."/>
            <person name="Yamazaki M."/>
            <person name="Ninomiya K."/>
            <person name="Ishibashi T."/>
            <person name="Yamashita H."/>
            <person name="Murakawa K."/>
            <person name="Fujimori K."/>
            <person name="Tanai H."/>
            <person name="Kimata M."/>
            <person name="Watanabe M."/>
            <person name="Hiraoka S."/>
            <person name="Chiba Y."/>
            <person name="Ishida S."/>
            <person name="Ono Y."/>
            <person name="Takiguchi S."/>
            <person name="Watanabe S."/>
            <person name="Yosida M."/>
            <person name="Hotuta T."/>
            <person name="Kusano J."/>
            <person name="Kanehori K."/>
            <person name="Takahashi-Fujii A."/>
            <person name="Hara H."/>
            <person name="Tanase T.-O."/>
            <person name="Nomura Y."/>
            <person name="Togiya S."/>
            <person name="Komai F."/>
            <person name="Hara R."/>
            <person name="Takeuchi K."/>
            <person name="Arita M."/>
            <person name="Imose N."/>
            <person name="Musashino K."/>
            <person name="Yuuki H."/>
            <person name="Oshima A."/>
            <person name="Sasaki N."/>
            <person name="Aotsuka S."/>
            <person name="Yoshikawa Y."/>
            <person name="Matsunawa H."/>
            <person name="Ichihara T."/>
            <person name="Shiohata N."/>
            <person name="Sano S."/>
            <person name="Moriya S."/>
            <person name="Momiyama H."/>
            <person name="Satoh N."/>
            <person name="Takami S."/>
            <person name="Terashima Y."/>
            <person name="Suzuki O."/>
            <person name="Nakagawa S."/>
            <person name="Senoh A."/>
            <person name="Mizoguchi H."/>
            <person name="Goto Y."/>
            <person name="Shimizu F."/>
            <person name="Wakebe H."/>
            <person name="Hishigaki H."/>
            <person name="Watanabe T."/>
            <person name="Sugiyama A."/>
            <person name="Takemoto M."/>
            <person name="Kawakami B."/>
            <person name="Yamazaki M."/>
            <person name="Watanabe K."/>
            <person name="Kumagai A."/>
            <person name="Itakura S."/>
            <person name="Fukuzumi Y."/>
            <person name="Fujimori Y."/>
            <person name="Komiyama M."/>
            <person name="Tashiro H."/>
            <person name="Tanigami A."/>
            <person name="Fujiwara T."/>
            <person name="Ono T."/>
            <person name="Yamada K."/>
            <person name="Fujii Y."/>
            <person name="Ozaki K."/>
            <person name="Hirao M."/>
            <person name="Ohmori Y."/>
            <person name="Kawabata A."/>
            <person name="Hikiji T."/>
            <person name="Kobatake N."/>
            <person name="Inagaki H."/>
            <person name="Ikema Y."/>
            <person name="Okamoto S."/>
            <person name="Okitani R."/>
            <person name="Kawakami T."/>
            <person name="Noguchi S."/>
            <person name="Itoh T."/>
            <person name="Shigeta K."/>
            <person name="Senba T."/>
            <person name="Matsumura K."/>
            <person name="Nakajima Y."/>
            <person name="Mizuno T."/>
            <person name="Morinaga M."/>
            <person name="Sasaki M."/>
            <person name="Togashi T."/>
            <person name="Oyama M."/>
            <person name="Hata H."/>
            <person name="Watanabe M."/>
            <person name="Komatsu T."/>
            <person name="Mizushima-Sugano J."/>
            <person name="Satoh T."/>
            <person name="Shirai Y."/>
            <person name="Takahashi Y."/>
            <person name="Nakagawa K."/>
            <person name="Okumura K."/>
            <person name="Nagase T."/>
            <person name="Nomura N."/>
            <person name="Kikuchi H."/>
            <person name="Masuho Y."/>
            <person name="Yamashita R."/>
            <person name="Nakai K."/>
            <person name="Yada T."/>
            <person name="Nakamura Y."/>
            <person name="Ohara O."/>
            <person name="Isogai T."/>
            <person name="Sugano S."/>
        </authorList>
    </citation>
    <scope>NUCLEOTIDE SEQUENCE [LARGE SCALE MRNA] (ISOFORM 2)</scope>
    <source>
        <tissue>Thalamus</tissue>
    </source>
</reference>
<reference key="3">
    <citation type="journal article" date="2007" name="BMC Genomics">
        <title>The full-ORF clone resource of the German cDNA consortium.</title>
        <authorList>
            <person name="Bechtel S."/>
            <person name="Rosenfelder H."/>
            <person name="Duda A."/>
            <person name="Schmidt C.P."/>
            <person name="Ernst U."/>
            <person name="Wellenreuther R."/>
            <person name="Mehrle A."/>
            <person name="Schuster C."/>
            <person name="Bahr A."/>
            <person name="Bloecker H."/>
            <person name="Heubner D."/>
            <person name="Hoerlein A."/>
            <person name="Michel G."/>
            <person name="Wedler H."/>
            <person name="Koehrer K."/>
            <person name="Ottenwaelder B."/>
            <person name="Poustka A."/>
            <person name="Wiemann S."/>
            <person name="Schupp I."/>
        </authorList>
    </citation>
    <scope>NUCLEOTIDE SEQUENCE [LARGE SCALE MRNA] (ISOFORM 1)</scope>
    <source>
        <tissue>Testis</tissue>
    </source>
</reference>
<reference key="4">
    <citation type="journal article" date="2006" name="Nature">
        <title>Analysis of the DNA sequence and duplication history of human chromosome 15.</title>
        <authorList>
            <person name="Zody M.C."/>
            <person name="Garber M."/>
            <person name="Sharpe T."/>
            <person name="Young S.K."/>
            <person name="Rowen L."/>
            <person name="O'Neill K."/>
            <person name="Whittaker C.A."/>
            <person name="Kamal M."/>
            <person name="Chang J.L."/>
            <person name="Cuomo C.A."/>
            <person name="Dewar K."/>
            <person name="FitzGerald M.G."/>
            <person name="Kodira C.D."/>
            <person name="Madan A."/>
            <person name="Qin S."/>
            <person name="Yang X."/>
            <person name="Abbasi N."/>
            <person name="Abouelleil A."/>
            <person name="Arachchi H.M."/>
            <person name="Baradarani L."/>
            <person name="Birditt B."/>
            <person name="Bloom S."/>
            <person name="Bloom T."/>
            <person name="Borowsky M.L."/>
            <person name="Burke J."/>
            <person name="Butler J."/>
            <person name="Cook A."/>
            <person name="DeArellano K."/>
            <person name="DeCaprio D."/>
            <person name="Dorris L. III"/>
            <person name="Dors M."/>
            <person name="Eichler E.E."/>
            <person name="Engels R."/>
            <person name="Fahey J."/>
            <person name="Fleetwood P."/>
            <person name="Friedman C."/>
            <person name="Gearin G."/>
            <person name="Hall J.L."/>
            <person name="Hensley G."/>
            <person name="Johnson E."/>
            <person name="Jones C."/>
            <person name="Kamat A."/>
            <person name="Kaur A."/>
            <person name="Locke D.P."/>
            <person name="Madan A."/>
            <person name="Munson G."/>
            <person name="Jaffe D.B."/>
            <person name="Lui A."/>
            <person name="Macdonald P."/>
            <person name="Mauceli E."/>
            <person name="Naylor J.W."/>
            <person name="Nesbitt R."/>
            <person name="Nicol R."/>
            <person name="O'Leary S.B."/>
            <person name="Ratcliffe A."/>
            <person name="Rounsley S."/>
            <person name="She X."/>
            <person name="Sneddon K.M.B."/>
            <person name="Stewart S."/>
            <person name="Sougnez C."/>
            <person name="Stone S.M."/>
            <person name="Topham K."/>
            <person name="Vincent D."/>
            <person name="Wang S."/>
            <person name="Zimmer A.R."/>
            <person name="Birren B.W."/>
            <person name="Hood L."/>
            <person name="Lander E.S."/>
            <person name="Nusbaum C."/>
        </authorList>
    </citation>
    <scope>NUCLEOTIDE SEQUENCE [LARGE SCALE GENOMIC DNA]</scope>
</reference>
<reference key="5">
    <citation type="journal article" date="2004" name="Genome Res.">
        <title>The status, quality, and expansion of the NIH full-length cDNA project: the Mammalian Gene Collection (MGC).</title>
        <authorList>
            <consortium name="The MGC Project Team"/>
        </authorList>
    </citation>
    <scope>NUCLEOTIDE SEQUENCE [LARGE SCALE MRNA] (ISOFORM 1)</scope>
    <source>
        <tissue>Lung</tissue>
        <tissue>Lymph</tissue>
    </source>
</reference>
<reference key="6">
    <citation type="journal article" date="1998" name="EMBO J.">
        <title>UBPY: a growth-regulated human ubiquitin isopeptidase.</title>
        <authorList>
            <person name="Naviglio S."/>
            <person name="Mattecucci C."/>
            <person name="Matoskova B."/>
            <person name="Nagase T."/>
            <person name="Nomura N."/>
            <person name="Di Fiore P.P."/>
            <person name="Draetta G.F."/>
        </authorList>
    </citation>
    <scope>FUNCTION</scope>
    <scope>CATALYTIC ACTIVITY</scope>
    <scope>INDUCTION</scope>
</reference>
<reference key="7">
    <citation type="journal article" date="2006" name="J. Biol. Chem.">
        <title>The ubiquitin isopeptidase UBPY regulates endosomal ubiquitin dynamics and is essential for receptor down-regulation.</title>
        <authorList>
            <person name="Row P.E."/>
            <person name="Prior I.A."/>
            <person name="McCullough J."/>
            <person name="Clague M.J."/>
            <person name="Urbe S."/>
        </authorList>
    </citation>
    <scope>FUNCTION</scope>
    <scope>SUBCELLULAR LOCATION</scope>
    <scope>MUTAGENESIS OF CYS-786</scope>
</reference>
<reference key="8">
    <citation type="journal article" date="2006" name="Nat. Biotechnol.">
        <title>A probability-based approach for high-throughput protein phosphorylation analysis and site localization.</title>
        <authorList>
            <person name="Beausoleil S.A."/>
            <person name="Villen J."/>
            <person name="Gerber S.A."/>
            <person name="Rush J."/>
            <person name="Gygi S.P."/>
        </authorList>
    </citation>
    <scope>IDENTIFICATION BY MASS SPECTROMETRY [LARGE SCALE ANALYSIS]</scope>
    <source>
        <tissue>Cervix carcinoma</tissue>
    </source>
</reference>
<reference key="9">
    <citation type="journal article" date="2007" name="J. Biol. Chem.">
        <title>The MIT domain of UBPY constitutes a CHMP binding and endosomal localization signal required for efficient epidermal growth factor receptor degradation.</title>
        <authorList>
            <person name="Row P.E."/>
            <person name="Liu H."/>
            <person name="Hayes S."/>
            <person name="Welchman R."/>
            <person name="Charalabous P."/>
            <person name="Hofmann K."/>
            <person name="Clague M.J."/>
            <person name="Sanderson C.M."/>
            <person name="Urbe S."/>
        </authorList>
    </citation>
    <scope>DOMAIN</scope>
    <scope>INTERACTION WITH CHMP1A; CHMP1B AND CHMP7</scope>
    <scope>FUNCTION</scope>
    <scope>SUBCELLULAR LOCATION</scope>
</reference>
<reference key="10">
    <citation type="journal article" date="2008" name="Cell">
        <title>Final stages of cytokinesis and midbody ring formation are controlled by BRUCE.</title>
        <authorList>
            <person name="Pohl C."/>
            <person name="Jentsch S."/>
        </authorList>
    </citation>
    <scope>FUNCTION</scope>
    <scope>INTERACTION WITH BIRC6/BRUCE AND KIF23/MKLP1</scope>
</reference>
<reference key="11">
    <citation type="journal article" date="2008" name="Proc. Natl. Acad. Sci. U.S.A.">
        <title>A quantitative atlas of mitotic phosphorylation.</title>
        <authorList>
            <person name="Dephoure N."/>
            <person name="Zhou C."/>
            <person name="Villen J."/>
            <person name="Beausoleil S.A."/>
            <person name="Bakalarski C.E."/>
            <person name="Elledge S.J."/>
            <person name="Gygi S.P."/>
        </authorList>
    </citation>
    <scope>PHOSPHORYLATION [LARGE SCALE ANALYSIS] AT SER-452; SER-718 AND SER-719</scope>
    <scope>IDENTIFICATION BY MASS SPECTROMETRY [LARGE SCALE ANALYSIS]</scope>
    <source>
        <tissue>Cervix carcinoma</tissue>
    </source>
</reference>
<reference key="12">
    <citation type="journal article" date="2009" name="Anal. Chem.">
        <title>Lys-N and trypsin cover complementary parts of the phosphoproteome in a refined SCX-based approach.</title>
        <authorList>
            <person name="Gauci S."/>
            <person name="Helbig A.O."/>
            <person name="Slijper M."/>
            <person name="Krijgsveld J."/>
            <person name="Heck A.J."/>
            <person name="Mohammed S."/>
        </authorList>
    </citation>
    <scope>IDENTIFICATION BY MASS SPECTROMETRY [LARGE SCALE ANALYSIS]</scope>
</reference>
<reference key="13">
    <citation type="journal article" date="2009" name="FEBS Lett.">
        <title>Interactions with LC3 and polyubiquitin chains link nbr1 to autophagic protein turnover.</title>
        <authorList>
            <person name="Waters S."/>
            <person name="Marchbank K."/>
            <person name="Solomon E."/>
            <person name="Whitehouse C."/>
            <person name="Gautel M."/>
        </authorList>
    </citation>
    <scope>INTERACTION WITH NBR1</scope>
    <scope>SUBCELLULAR LOCATION</scope>
</reference>
<reference key="14">
    <citation type="journal article" date="2009" name="Mol. Biol. Cell">
        <title>Essential role of hIST1 in cytokinesis.</title>
        <authorList>
            <person name="Agromayor M."/>
            <person name="Carlton J.G."/>
            <person name="Phelan J.P."/>
            <person name="Matthews D.R."/>
            <person name="Carlin L.M."/>
            <person name="Ameer-Beg S."/>
            <person name="Bowers K."/>
            <person name="Martin-Serrano J."/>
        </authorList>
    </citation>
    <scope>INTERACTION WITH IST1</scope>
</reference>
<reference key="15">
    <citation type="journal article" date="2009" name="Sci. Signal.">
        <title>Quantitative phosphoproteomic analysis of T cell receptor signaling reveals system-wide modulation of protein-protein interactions.</title>
        <authorList>
            <person name="Mayya V."/>
            <person name="Lundgren D.H."/>
            <person name="Hwang S.-I."/>
            <person name="Rezaul K."/>
            <person name="Wu L."/>
            <person name="Eng J.K."/>
            <person name="Rodionov V."/>
            <person name="Han D.K."/>
        </authorList>
    </citation>
    <scope>IDENTIFICATION BY MASS SPECTROMETRY [LARGE SCALE ANALYSIS]</scope>
    <source>
        <tissue>Leukemic T-cell</tissue>
    </source>
</reference>
<reference key="16">
    <citation type="journal article" date="2010" name="Sci. Signal.">
        <title>Quantitative phosphoproteomics reveals widespread full phosphorylation site occupancy during mitosis.</title>
        <authorList>
            <person name="Olsen J.V."/>
            <person name="Vermeulen M."/>
            <person name="Santamaria A."/>
            <person name="Kumar C."/>
            <person name="Miller M.L."/>
            <person name="Jensen L.J."/>
            <person name="Gnad F."/>
            <person name="Cox J."/>
            <person name="Jensen T.S."/>
            <person name="Nigg E.A."/>
            <person name="Brunak S."/>
            <person name="Mann M."/>
        </authorList>
    </citation>
    <scope>PHOSPHORYLATION [LARGE SCALE ANALYSIS] AT SER-160 AND SER-718</scope>
    <scope>IDENTIFICATION BY MASS SPECTROMETRY [LARGE SCALE ANALYSIS]</scope>
    <source>
        <tissue>Cervix carcinoma</tissue>
    </source>
</reference>
<reference key="17">
    <citation type="journal article" date="2011" name="BMC Syst. Biol.">
        <title>Initial characterization of the human central proteome.</title>
        <authorList>
            <person name="Burkard T.R."/>
            <person name="Planyavsky M."/>
            <person name="Kaupe I."/>
            <person name="Breitwieser F.P."/>
            <person name="Buerckstuemmer T."/>
            <person name="Bennett K.L."/>
            <person name="Superti-Furga G."/>
            <person name="Colinge J."/>
        </authorList>
    </citation>
    <scope>IDENTIFICATION BY MASS SPECTROMETRY [LARGE SCALE ANALYSIS]</scope>
</reference>
<reference key="18">
    <citation type="journal article" date="2011" name="Sci. Signal.">
        <title>System-wide temporal characterization of the proteome and phosphoproteome of human embryonic stem cell differentiation.</title>
        <authorList>
            <person name="Rigbolt K.T."/>
            <person name="Prokhorova T.A."/>
            <person name="Akimov V."/>
            <person name="Henningsen J."/>
            <person name="Johansen P.T."/>
            <person name="Kratchmarova I."/>
            <person name="Kassem M."/>
            <person name="Mann M."/>
            <person name="Olsen J.V."/>
            <person name="Blagoev B."/>
        </authorList>
    </citation>
    <scope>PHOSPHORYLATION [LARGE SCALE ANALYSIS] AT THR-577 AND SER-718</scope>
    <scope>IDENTIFICATION BY MASS SPECTROMETRY [LARGE SCALE ANALYSIS]</scope>
</reference>
<reference key="19">
    <citation type="journal article" date="2013" name="J. Proteome Res.">
        <title>Toward a comprehensive characterization of a human cancer cell phosphoproteome.</title>
        <authorList>
            <person name="Zhou H."/>
            <person name="Di Palma S."/>
            <person name="Preisinger C."/>
            <person name="Peng M."/>
            <person name="Polat A.N."/>
            <person name="Heck A.J."/>
            <person name="Mohammed S."/>
        </authorList>
    </citation>
    <scope>PHOSPHORYLATION [LARGE SCALE ANALYSIS] AT SER-160; SER-392; SER-400; SER-452; THR-577 AND SER-718</scope>
    <scope>IDENTIFICATION BY MASS SPECTROMETRY [LARGE SCALE ANALYSIS]</scope>
    <source>
        <tissue>Cervix carcinoma</tissue>
        <tissue>Erythroleukemia</tissue>
    </source>
</reference>
<reference key="20">
    <citation type="journal article" date="2014" name="J. Proteomics">
        <title>An enzyme assisted RP-RPLC approach for in-depth analysis of human liver phosphoproteome.</title>
        <authorList>
            <person name="Bian Y."/>
            <person name="Song C."/>
            <person name="Cheng K."/>
            <person name="Dong M."/>
            <person name="Wang F."/>
            <person name="Huang J."/>
            <person name="Sun D."/>
            <person name="Wang L."/>
            <person name="Ye M."/>
            <person name="Zou H."/>
        </authorList>
    </citation>
    <scope>IDENTIFICATION BY MASS SPECTROMETRY [LARGE SCALE ANALYSIS]</scope>
    <source>
        <tissue>Liver</tissue>
    </source>
</reference>
<reference key="21">
    <citation type="journal article" date="2016" name="J. Biol. Chem.">
        <title>The Endosome-associated Deubiquitinating Enzyme USP8 Regulates BACE1 Enzyme Ubiquitination and Degradation.</title>
        <authorList>
            <person name="Yeates E.F."/>
            <person name="Tesco G."/>
        </authorList>
    </citation>
    <scope>FUNCTION</scope>
</reference>
<reference key="22">
    <citation type="journal article" date="2018" name="EMBO J.">
        <title>Zika virus elicits inflammation to evade antiviral response by cleaving cGAS via NS1-caspase-1 axis.</title>
        <authorList>
            <person name="Zheng Y."/>
            <person name="Liu Q."/>
            <person name="Wu Y."/>
            <person name="Ma L."/>
            <person name="Zhang Z."/>
            <person name="Liu T."/>
            <person name="Jin S."/>
            <person name="She Y."/>
            <person name="Li Y.P."/>
            <person name="Cui J."/>
        </authorList>
    </citation>
    <scope>INTERACTION WITH ZIKA VIRUS NON-STRUCTURAL PROTEIN 1 (MICROBIAL INFECTION)</scope>
</reference>
<reference key="23">
    <citation type="submission" date="2004-11" db="PDB data bank">
        <title>Solution structure of the rhodanese-like domain in human ubiquitin specific protease 8 (UBP8).</title>
        <authorList>
            <consortium name="RIKEN structural genomics initiative (RSGI)"/>
        </authorList>
    </citation>
    <scope>STRUCTURE BY NMR OF 174-317</scope>
</reference>
<reference key="24">
    <citation type="journal article" date="2006" name="J. Biol. Chem.">
        <title>Amino-terminal dimerization, NRDP1-rhodanese interaction, and inhibited catalytic domain conformation of the ubiquitin-specific protease 8 (USP8).</title>
        <authorList>
            <person name="Avvakumov G.V."/>
            <person name="Walker J.R."/>
            <person name="Xue S."/>
            <person name="Finerty P.J. Jr."/>
            <person name="Mackenzie F."/>
            <person name="Newman E.M."/>
            <person name="Dhe-Paganon S."/>
        </authorList>
    </citation>
    <scope>X-RAY CRYSTALLOGRAPHY (2.0 ANGSTROMS) OF 181-318 IN COMPLEX WITH RNF41</scope>
</reference>
<reference key="25">
    <citation type="journal article" date="2014" name="Science">
        <title>Exome sequencing links corticospinal motor neuron disease to common neurodegenerative disorders.</title>
        <authorList>
            <person name="Novarino G."/>
            <person name="Fenstermaker A.G."/>
            <person name="Zaki M.S."/>
            <person name="Hofree M."/>
            <person name="Silhavy J.L."/>
            <person name="Heiberg A.D."/>
            <person name="Abdellateef M."/>
            <person name="Rosti B."/>
            <person name="Scott E."/>
            <person name="Mansour L."/>
            <person name="Masri A."/>
            <person name="Kayserili H."/>
            <person name="Al-Aama J.Y."/>
            <person name="Abdel-Salam G.M."/>
            <person name="Karminejad A."/>
            <person name="Kara M."/>
            <person name="Kara B."/>
            <person name="Bozorgmehri B."/>
            <person name="Ben-Omran T."/>
            <person name="Mojahedi F."/>
            <person name="Mahmoud I.G."/>
            <person name="Bouslam N."/>
            <person name="Bouhouche A."/>
            <person name="Benomar A."/>
            <person name="Hanein S."/>
            <person name="Raymond L."/>
            <person name="Forlani S."/>
            <person name="Mascaro M."/>
            <person name="Selim L."/>
            <person name="Shehata N."/>
            <person name="Al-Allawi N."/>
            <person name="Bindu P.S."/>
            <person name="Azam M."/>
            <person name="Gunel M."/>
            <person name="Caglayan A."/>
            <person name="Bilguvar K."/>
            <person name="Tolun A."/>
            <person name="Issa M.Y."/>
            <person name="Schroth J."/>
            <person name="Spencer E.G."/>
            <person name="Rosti R.O."/>
            <person name="Akizu N."/>
            <person name="Vaux K.K."/>
            <person name="Johansen A."/>
            <person name="Koh A.A."/>
            <person name="Megahed H."/>
            <person name="Durr A."/>
            <person name="Brice A."/>
            <person name="Stevanin G."/>
            <person name="Gabriel S.B."/>
            <person name="Ideker T."/>
            <person name="Gleeson J.G."/>
        </authorList>
    </citation>
    <scope>VARIANT LYS-310</scope>
</reference>
<reference key="26">
    <citation type="journal article" date="2017" name="J. Clin. Endocrinol. Metab.">
        <title>Somatic USP8 gene mutations are a common cause of pediatric Cushing disease.</title>
        <authorList>
            <person name="Faucz F.R."/>
            <person name="Tirosh A."/>
            <person name="Tatsi C."/>
            <person name="Berthon A."/>
            <person name="Hernandez-Ramirez L.C."/>
            <person name="Settas N."/>
            <person name="Angelousi A."/>
            <person name="Correa R."/>
            <person name="Papadakis G.Z."/>
            <person name="Chittiboina P."/>
            <person name="Quezado M."/>
            <person name="Pankratz N."/>
            <person name="Lane J."/>
            <person name="Dimopoulos A."/>
            <person name="Mills J.L."/>
            <person name="Lodish M."/>
            <person name="Stratakis C.A."/>
        </authorList>
    </citation>
    <scope>VARIANTS PITA4 718-SER--THR-723 DEL; CYS-718; PRO-718; SER-718 DEL AND ARG-720</scope>
    <scope>CHARACTERIZATION OF VARIANT PITA4 PRO-718</scope>
    <scope>SUBCELLULAR LOCATION</scope>
</reference>
<comment type="function">
    <text evidence="7 9 10 14 17">Hydrolase that can remove conjugated ubiquitin from proteins and therefore plays an important regulatory role at the level of protein turnover by preventing degradation. Converts both 'Lys-48' an 'Lys-63'-linked ubiquitin chains. Catalytic activity is enhanced in the M phase. Involved in cell proliferation. Required to enter into S phase in response to serum stimulation. May regulate T-cell anergy mediated by RNF128 via the formation of a complex containing RNF128 and OTUB1. Probably regulates the stability of STAM2 and RASGRF1. Regulates endosomal ubiquitin dynamics, cargo sorting, membrane traffic at early endosomes, and maintenance of ESCRT-0 stability. The level of protein ubiquitination on endosomes is essential for maintaining the morphology of the organelle. Deubiquitinates EPS15 and controls tyrosine kinase stability. Removes conjugated ubiquitin from EGFR thus regulating EGFR degradation and downstream MAPK signaling. Involved in acrosome biogenesis through interaction with the spermatid ESCRT-0 complex and microtubules. Deubiquitinates BIRC6/bruce and KIF23/MKLP1. Deubiquitinates BACE1 which inhibits BACE1 lysosomal degradation and modulates BACE-mediated APP cleavage and amyloid-beta formation (PubMed:27302062).</text>
</comment>
<comment type="catalytic activity">
    <reaction evidence="17">
        <text>Thiol-dependent hydrolysis of ester, thioester, amide, peptide and isopeptide bonds formed by the C-terminal Gly of ubiquitin (a 76-residue protein attached to proteins as an intracellular targeting signal).</text>
        <dbReference type="EC" id="3.4.19.12"/>
    </reaction>
</comment>
<comment type="subunit">
    <text evidence="1 8 9 10 11 12">Forms a ternary complex with RNF128 and OTUB1. Interacts (via C-terminal UCH catalytic domain) with OTUB1 isoform 1. Interacts with STAM2 (via SH3 domain). Interacts with DNAJB3, EGFR, EPS15, RASGRF1, RNF41, YWHAE, YWHAG and YWHAZ (By similarity). Interacts with NBR1, RASGRF1, RNF41 and IST1. Associates with the ESCRT-0 complex and with microtubules (By similarity). Interacts with BIRC6/bruce and KIF23/MKLP1.</text>
</comment>
<comment type="subunit">
    <text evidence="16">(Microbial infection) Interacts with Zika virus non-structural protein 1.</text>
</comment>
<comment type="interaction">
    <interactant intactId="EBI-1050865">
        <id>P40818</id>
    </interactant>
    <interactant intactId="EBI-1057156">
        <id>Q9HD42</id>
        <label>CHMP1A</label>
    </interactant>
    <organismsDiffer>false</organismsDiffer>
    <experiments>3</experiments>
</comment>
<comment type="interaction">
    <interactant intactId="EBI-1050865">
        <id>P40818</id>
    </interactant>
    <interactant intactId="EBI-2118090">
        <id>Q7LBR1</id>
        <label>CHMP1B</label>
    </interactant>
    <organismsDiffer>false</organismsDiffer>
    <experiments>5</experiments>
</comment>
<comment type="interaction">
    <interactant intactId="EBI-1050865">
        <id>P40818</id>
    </interactant>
    <interactant intactId="EBI-1221015">
        <id>Q96CF2</id>
        <label>CHMP4C</label>
    </interactant>
    <organismsDiffer>false</organismsDiffer>
    <experiments>2</experiments>
</comment>
<comment type="interaction">
    <interactant intactId="EBI-1050865">
        <id>P40818</id>
    </interactant>
    <interactant intactId="EBI-447470">
        <id>Q99814</id>
        <label>EPAS1</label>
    </interactant>
    <organismsDiffer>false</organismsDiffer>
    <experiments>2</experiments>
</comment>
<comment type="interaction">
    <interactant intactId="EBI-1050865">
        <id>P40818</id>
    </interactant>
    <interactant intactId="EBI-447269">
        <id>Q16665</id>
        <label>HIF1A</label>
    </interactant>
    <organismsDiffer>false</organismsDiffer>
    <experiments>2</experiments>
</comment>
<comment type="interaction">
    <interactant intactId="EBI-1050865">
        <id>P40818</id>
    </interactant>
    <interactant intactId="EBI-742698">
        <id>Q14596</id>
        <label>NBR1</label>
    </interactant>
    <organismsDiffer>false</organismsDiffer>
    <experiments>3</experiments>
</comment>
<comment type="interaction">
    <interactant intactId="EBI-1050865">
        <id>P40818</id>
    </interactant>
    <interactant intactId="EBI-476295">
        <id>P31947</id>
        <label>SFN</label>
    </interactant>
    <organismsDiffer>false</organismsDiffer>
    <experiments>5</experiments>
</comment>
<comment type="interaction">
    <interactant intactId="EBI-1050865">
        <id>P40818</id>
    </interactant>
    <interactant intactId="EBI-356498">
        <id>P62258</id>
        <label>YWHAE</label>
    </interactant>
    <organismsDiffer>false</organismsDiffer>
    <experiments>5</experiments>
</comment>
<comment type="interaction">
    <interactant intactId="EBI-1050865">
        <id>P40818</id>
    </interactant>
    <interactant intactId="EBI-347088">
        <id>P63104</id>
        <label>YWHAZ</label>
    </interactant>
    <organismsDiffer>false</organismsDiffer>
    <experiments>5</experiments>
</comment>
<comment type="subcellular location">
    <subcellularLocation>
        <location evidence="7 9 12 15">Cytoplasm</location>
    </subcellularLocation>
    <subcellularLocation>
        <location evidence="2">Nucleus</location>
    </subcellularLocation>
    <subcellularLocation>
        <location evidence="7 9">Endosome membrane</location>
        <topology evidence="19">Peripheral membrane protein</topology>
    </subcellularLocation>
    <subcellularLocation>
        <location evidence="7">Cell membrane</location>
        <topology evidence="19">Peripheral membrane protein</topology>
    </subcellularLocation>
</comment>
<comment type="alternative products">
    <event type="alternative splicing"/>
    <isoform>
        <id>P40818-1</id>
        <name>1</name>
        <sequence type="displayed"/>
    </isoform>
    <isoform>
        <id>P40818-2</id>
        <name>2</name>
        <sequence type="described" ref="VSP_054594 VSP_054595"/>
    </isoform>
</comment>
<comment type="induction">
    <text evidence="17">Upon growth stimulation in starved human fibroblasts. Decreases in response to growth arrest induced by cell-cell contact.</text>
</comment>
<comment type="domain">
    <text evidence="9">The MIT domain is required for endosomal localization, CHMP1B-binding, maintenance of ESCRT-0 stability and EGFR degradation.</text>
</comment>
<comment type="domain">
    <text evidence="1">The rhodanese domain is sufficient for RNF41-binding.</text>
</comment>
<comment type="PTM">
    <text evidence="1">Phosphorylation of Ser-718 is essential for interaction with YWHAE and for cytosol localization. Undergoes dephosphorylation at Ser-718 in the M phase. Tyrosine-phosphorylated in its N-terminal half in an EGFR-dependent manner.</text>
</comment>
<comment type="PTM">
    <text evidence="1">Ubiquitinated. Inactive form is mostly monoubiquitinated, but polyubiquitination happens too. Ubiquitination is increased in EGF-stimulated cells. Ubiquitination of active form is undetectable, suggesting a possibility that USP8 deubiquitinates itself, thereby regulating its own function (By similarity).</text>
</comment>
<comment type="disease" evidence="15">
    <disease id="DI-01168">
        <name>Pituitary adenoma 4, ACTH-secreting</name>
        <acronym>PITA4</acronym>
        <description>A form of pituitary adenoma, a neoplasm of the pituitary gland and one of the most common neuroendocrine tumors. Pituitary adenomas are clinically classified as functional and non-functional tumors, and manifest with a variety of features, including local invasion of surrounding structures and excessive hormone secretion. Functional pituitary adenomas are further classified by the type of hormone they secrete. PITA4 results in excessive production of adrenocorticotropic hormone. This leads to hypersecretion of cortisol by the adrenal glands and ACTH-dependent Cushing syndrome. Clinical manifestations of Cushing syndrome include facial and truncal obesity, abdominal striae, muscular weakness, osteoporosis, arterial hypertension, diabetes.</description>
        <dbReference type="MIM" id="219090"/>
    </disease>
    <text>The disease is caused by variants affecting the gene represented in this entry.</text>
</comment>
<comment type="similarity">
    <text evidence="19">Belongs to the peptidase C19 family.</text>
</comment>
<comment type="sequence caution" evidence="19">
    <conflict type="miscellaneous discrepancy">
        <sequence resource="EMBL-CDS" id="AAH38801"/>
    </conflict>
    <text>Contaminating sequence. Potential poly-A sequence.</text>
</comment>
<comment type="sequence caution" evidence="19">
    <conflict type="miscellaneous discrepancy">
        <sequence resource="EMBL-CDS" id="AAH51345"/>
    </conflict>
    <text>Contaminating sequence. Potential poly-A sequence.</text>
</comment>
<feature type="chain" id="PRO_0000080627" description="Ubiquitin carboxyl-terminal hydrolase 8">
    <location>
        <begin position="1"/>
        <end position="1118"/>
    </location>
</feature>
<feature type="domain" description="MIT">
    <location>
        <begin position="33"/>
        <end position="116"/>
    </location>
</feature>
<feature type="domain" description="Rhodanese" evidence="3">
    <location>
        <begin position="195"/>
        <end position="313"/>
    </location>
</feature>
<feature type="domain" description="USP">
    <location>
        <begin position="777"/>
        <end position="1109"/>
    </location>
</feature>
<feature type="region of interest" description="Disordered" evidence="6">
    <location>
        <begin position="120"/>
        <end position="177"/>
    </location>
</feature>
<feature type="region of interest" description="Disordered" evidence="6">
    <location>
        <begin position="402"/>
        <end position="447"/>
    </location>
</feature>
<feature type="region of interest" description="Disordered" evidence="6">
    <location>
        <begin position="475"/>
        <end position="648"/>
    </location>
</feature>
<feature type="region of interest" description="Disordered" evidence="6">
    <location>
        <begin position="679"/>
        <end position="746"/>
    </location>
</feature>
<feature type="short sequence motif" description="SH3-binding" evidence="1">
    <location>
        <begin position="405"/>
        <end position="413"/>
    </location>
</feature>
<feature type="compositionally biased region" description="Basic and acidic residues" evidence="6">
    <location>
        <begin position="120"/>
        <end position="146"/>
    </location>
</feature>
<feature type="compositionally biased region" description="Basic and acidic residues" evidence="6">
    <location>
        <begin position="158"/>
        <end position="177"/>
    </location>
</feature>
<feature type="compositionally biased region" description="Basic and acidic residues" evidence="6">
    <location>
        <begin position="417"/>
        <end position="429"/>
    </location>
</feature>
<feature type="compositionally biased region" description="Basic and acidic residues" evidence="6">
    <location>
        <begin position="475"/>
        <end position="573"/>
    </location>
</feature>
<feature type="compositionally biased region" description="Basic and acidic residues" evidence="6">
    <location>
        <begin position="618"/>
        <end position="645"/>
    </location>
</feature>
<feature type="compositionally biased region" description="Polar residues" evidence="6">
    <location>
        <begin position="716"/>
        <end position="726"/>
    </location>
</feature>
<feature type="active site" description="Nucleophile" evidence="4 5">
    <location>
        <position position="786"/>
    </location>
</feature>
<feature type="active site" description="Proton acceptor" evidence="4 5">
    <location>
        <position position="1067"/>
    </location>
</feature>
<feature type="modified residue" description="Phosphoserine" evidence="22 24">
    <location>
        <position position="160"/>
    </location>
</feature>
<feature type="modified residue" description="Phosphoserine" evidence="24">
    <location>
        <position position="392"/>
    </location>
</feature>
<feature type="modified residue" description="Phosphoserine" evidence="24">
    <location>
        <position position="400"/>
    </location>
</feature>
<feature type="modified residue" description="Phosphoserine" evidence="21 24">
    <location>
        <position position="452"/>
    </location>
</feature>
<feature type="modified residue" description="Phosphothreonine" evidence="23 24">
    <location>
        <position position="577"/>
    </location>
</feature>
<feature type="modified residue" description="Phosphoserine" evidence="21 22 23 24">
    <location>
        <position position="718"/>
    </location>
</feature>
<feature type="modified residue" description="Phosphoserine" evidence="21">
    <location>
        <position position="719"/>
    </location>
</feature>
<feature type="modified residue" description="Phosphothreonine" evidence="2">
    <location>
        <position position="945"/>
    </location>
</feature>
<feature type="splice variant" id="VSP_054594" description="In isoform 2." evidence="18">
    <location>
        <begin position="35"/>
        <end position="111"/>
    </location>
</feature>
<feature type="splice variant" id="VSP_054595" description="In isoform 2." evidence="18">
    <location>
        <begin position="601"/>
        <end position="629"/>
    </location>
</feature>
<feature type="sequence variant" id="VAR_077850" description="Found in a patient with spastic paraplegia; uncertain significance; dbSNP:rs587777201." evidence="13">
    <original>Q</original>
    <variation>K</variation>
    <location>
        <position position="310"/>
    </location>
</feature>
<feature type="sequence variant" id="VAR_017796" description="In dbSNP:rs3743044.">
    <original>D</original>
    <variation>G</variation>
    <location>
        <position position="443"/>
    </location>
</feature>
<feature type="sequence variant" id="VAR_079717" description="In PITA4; uncertain significance; somatic mutation." evidence="15">
    <location>
        <begin position="718"/>
        <end position="723"/>
    </location>
</feature>
<feature type="sequence variant" id="VAR_079718" description="In PITA4; uncertain significance; somatic mutation; dbSNP:rs672601308." evidence="15">
    <original>S</original>
    <variation>C</variation>
    <location>
        <position position="718"/>
    </location>
</feature>
<feature type="sequence variant" id="VAR_079719" description="In PITA4; uncertain significance; somatic mutation; localizes to nucleus instead of cytoplasm; dbSNP:rs672601307." evidence="15">
    <original>S</original>
    <variation>P</variation>
    <location>
        <position position="718"/>
    </location>
</feature>
<feature type="sequence variant" id="VAR_079720" description="In PITA4; uncertain significance; somatic mutation." evidence="15">
    <location>
        <position position="718"/>
    </location>
</feature>
<feature type="sequence variant" id="VAR_079721" description="In PITA4; uncertain significance; somatic mutation; dbSNP:rs672601311." evidence="15">
    <original>P</original>
    <variation>R</variation>
    <location>
        <position position="720"/>
    </location>
</feature>
<feature type="sequence variant" id="VAR_051525" description="In dbSNP:rs11638390.">
    <original>T</original>
    <variation>A</variation>
    <location>
        <position position="739"/>
    </location>
</feature>
<feature type="sequence variant" id="VAR_017797" description="In dbSNP:rs1056577.">
    <original>A</original>
    <variation>G</variation>
    <location>
        <position position="827"/>
    </location>
</feature>
<feature type="mutagenesis site" description="Impairs deubiquitination activity and leads to endosome membrane accumulation." evidence="7">
    <original>C</original>
    <variation>S</variation>
    <location>
        <position position="786"/>
    </location>
</feature>
<feature type="sequence conflict" description="In Ref. 3; CAD97662." evidence="19" ref="3">
    <original>E</original>
    <variation>G</variation>
    <location>
        <position position="526"/>
    </location>
</feature>
<feature type="sequence conflict" description="In Ref. 3; CAD97662." evidence="19" ref="3">
    <original>Y</original>
    <variation>H</variation>
    <location>
        <position position="717"/>
    </location>
</feature>
<feature type="sequence conflict" description="In Ref. 3; CAD97662." evidence="19" ref="3">
    <original>T</original>
    <variation>A</variation>
    <location>
        <position position="945"/>
    </location>
</feature>
<feature type="helix" evidence="26">
    <location>
        <begin position="17"/>
        <end position="21"/>
    </location>
</feature>
<feature type="helix" evidence="26">
    <location>
        <begin position="22"/>
        <end position="24"/>
    </location>
</feature>
<feature type="helix" evidence="26">
    <location>
        <begin position="28"/>
        <end position="30"/>
    </location>
</feature>
<feature type="helix" evidence="26">
    <location>
        <begin position="33"/>
        <end position="52"/>
    </location>
</feature>
<feature type="helix" evidence="26">
    <location>
        <begin position="56"/>
        <end position="73"/>
    </location>
</feature>
<feature type="helix" evidence="26">
    <location>
        <begin position="77"/>
        <end position="81"/>
    </location>
</feature>
<feature type="helix" evidence="26">
    <location>
        <begin position="83"/>
        <end position="90"/>
    </location>
</feature>
<feature type="helix" evidence="26">
    <location>
        <begin position="92"/>
        <end position="138"/>
    </location>
</feature>
<feature type="strand" evidence="25">
    <location>
        <begin position="181"/>
        <end position="183"/>
    </location>
</feature>
<feature type="helix" evidence="28">
    <location>
        <begin position="185"/>
        <end position="193"/>
    </location>
</feature>
<feature type="strand" evidence="25">
    <location>
        <begin position="195"/>
        <end position="197"/>
    </location>
</feature>
<feature type="strand" evidence="28">
    <location>
        <begin position="199"/>
        <end position="203"/>
    </location>
</feature>
<feature type="helix" evidence="28">
    <location>
        <begin position="207"/>
        <end position="212"/>
    </location>
</feature>
<feature type="strand" evidence="25">
    <location>
        <begin position="219"/>
        <end position="221"/>
    </location>
</feature>
<feature type="helix" evidence="28">
    <location>
        <begin position="223"/>
        <end position="225"/>
    </location>
</feature>
<feature type="helix" evidence="28">
    <location>
        <begin position="232"/>
        <end position="237"/>
    </location>
</feature>
<feature type="helix" evidence="28">
    <location>
        <begin position="241"/>
        <end position="248"/>
    </location>
</feature>
<feature type="turn" evidence="28">
    <location>
        <begin position="249"/>
        <end position="252"/>
    </location>
</feature>
<feature type="strand" evidence="28">
    <location>
        <begin position="253"/>
        <end position="259"/>
    </location>
</feature>
<feature type="helix" evidence="28">
    <location>
        <begin position="265"/>
        <end position="267"/>
    </location>
</feature>
<feature type="helix" evidence="28">
    <location>
        <begin position="273"/>
        <end position="282"/>
    </location>
</feature>
<feature type="strand" evidence="28">
    <location>
        <begin position="295"/>
        <end position="297"/>
    </location>
</feature>
<feature type="helix" evidence="28">
    <location>
        <begin position="300"/>
        <end position="307"/>
    </location>
</feature>
<feature type="helix" evidence="28">
    <location>
        <begin position="309"/>
        <end position="311"/>
    </location>
</feature>
<feature type="helix" evidence="27">
    <location>
        <begin position="763"/>
        <end position="765"/>
    </location>
</feature>
<feature type="strand" evidence="27">
    <location>
        <begin position="782"/>
        <end position="784"/>
    </location>
</feature>
<feature type="helix" evidence="27">
    <location>
        <begin position="786"/>
        <end position="796"/>
    </location>
</feature>
<feature type="helix" evidence="27">
    <location>
        <begin position="799"/>
        <end position="806"/>
    </location>
</feature>
<feature type="turn" evidence="27">
    <location>
        <begin position="807"/>
        <end position="809"/>
    </location>
</feature>
<feature type="helix" evidence="27">
    <location>
        <begin position="810"/>
        <end position="813"/>
    </location>
</feature>
<feature type="turn" evidence="29">
    <location>
        <begin position="819"/>
        <end position="824"/>
    </location>
</feature>
<feature type="helix" evidence="27">
    <location>
        <begin position="825"/>
        <end position="839"/>
    </location>
</feature>
<feature type="strand" evidence="27">
    <location>
        <begin position="842"/>
        <end position="845"/>
    </location>
</feature>
<feature type="helix" evidence="27">
    <location>
        <begin position="848"/>
        <end position="857"/>
    </location>
</feature>
<feature type="helix" evidence="27">
    <location>
        <begin position="859"/>
        <end position="861"/>
    </location>
</feature>
<feature type="strand" evidence="27">
    <location>
        <begin position="862"/>
        <end position="865"/>
    </location>
</feature>
<feature type="helix" evidence="27">
    <location>
        <begin position="869"/>
        <end position="884"/>
    </location>
</feature>
<feature type="helix" evidence="27">
    <location>
        <begin position="903"/>
        <end position="917"/>
    </location>
</feature>
<feature type="helix" evidence="27">
    <location>
        <begin position="921"/>
        <end position="926"/>
    </location>
</feature>
<feature type="strand" evidence="27">
    <location>
        <begin position="928"/>
        <end position="936"/>
    </location>
</feature>
<feature type="turn" evidence="27">
    <location>
        <begin position="937"/>
        <end position="939"/>
    </location>
</feature>
<feature type="strand" evidence="27">
    <location>
        <begin position="942"/>
        <end position="954"/>
    </location>
</feature>
<feature type="strand" evidence="27">
    <location>
        <begin position="959"/>
        <end position="963"/>
    </location>
</feature>
<feature type="helix" evidence="27">
    <location>
        <begin position="964"/>
        <end position="971"/>
    </location>
</feature>
<feature type="strand" evidence="27">
    <location>
        <begin position="975"/>
        <end position="977"/>
    </location>
</feature>
<feature type="helix" evidence="29">
    <location>
        <begin position="979"/>
        <end position="981"/>
    </location>
</feature>
<feature type="strand" evidence="27">
    <location>
        <begin position="983"/>
        <end position="985"/>
    </location>
</feature>
<feature type="turn" evidence="27">
    <location>
        <begin position="986"/>
        <end position="989"/>
    </location>
</feature>
<feature type="strand" evidence="27">
    <location>
        <begin position="990"/>
        <end position="992"/>
    </location>
</feature>
<feature type="strand" evidence="27">
    <location>
        <begin position="994"/>
        <end position="1002"/>
    </location>
</feature>
<feature type="strand" evidence="27">
    <location>
        <begin position="1005"/>
        <end position="1011"/>
    </location>
</feature>
<feature type="strand" evidence="27">
    <location>
        <begin position="1014"/>
        <end position="1016"/>
    </location>
</feature>
<feature type="strand" evidence="27">
    <location>
        <begin position="1018"/>
        <end position="1023"/>
    </location>
</feature>
<feature type="strand" evidence="27">
    <location>
        <begin position="1027"/>
        <end position="1029"/>
    </location>
</feature>
<feature type="helix" evidence="27">
    <location>
        <begin position="1038"/>
        <end position="1040"/>
    </location>
</feature>
<feature type="strand" evidence="27">
    <location>
        <begin position="1051"/>
        <end position="1061"/>
    </location>
</feature>
<feature type="turn" evidence="27">
    <location>
        <begin position="1063"/>
        <end position="1065"/>
    </location>
</feature>
<feature type="strand" evidence="27">
    <location>
        <begin position="1067"/>
        <end position="1074"/>
    </location>
</feature>
<feature type="turn" evidence="27">
    <location>
        <begin position="1075"/>
        <end position="1078"/>
    </location>
</feature>
<feature type="strand" evidence="27">
    <location>
        <begin position="1079"/>
        <end position="1084"/>
    </location>
</feature>
<feature type="strand" evidence="27">
    <location>
        <begin position="1087"/>
        <end position="1090"/>
    </location>
</feature>
<feature type="helix" evidence="27">
    <location>
        <begin position="1093"/>
        <end position="1095"/>
    </location>
</feature>
<feature type="strand" evidence="27">
    <location>
        <begin position="1101"/>
        <end position="1107"/>
    </location>
</feature>
<name>UBP8_HUMAN</name>
<proteinExistence type="evidence at protein level"/>
<protein>
    <recommendedName>
        <fullName evidence="19">Ubiquitin carboxyl-terminal hydrolase 8</fullName>
        <ecNumber evidence="17">3.4.19.12</ecNumber>
    </recommendedName>
    <alternativeName>
        <fullName>Deubiquitinating enzyme 8</fullName>
    </alternativeName>
    <alternativeName>
        <fullName>Ubiquitin isopeptidase Y</fullName>
        <shortName>hUBPy</shortName>
    </alternativeName>
    <alternativeName>
        <fullName>Ubiquitin thioesterase 8</fullName>
    </alternativeName>
    <alternativeName>
        <fullName>Ubiquitin-specific-processing protease 8</fullName>
    </alternativeName>
</protein>
<keyword id="KW-0002">3D-structure</keyword>
<keyword id="KW-0025">Alternative splicing</keyword>
<keyword id="KW-0131">Cell cycle</keyword>
<keyword id="KW-1003">Cell membrane</keyword>
<keyword id="KW-1062">Cushing syndrome</keyword>
<keyword id="KW-0963">Cytoplasm</keyword>
<keyword id="KW-0225">Disease variant</keyword>
<keyword id="KW-0967">Endosome</keyword>
<keyword id="KW-0378">Hydrolase</keyword>
<keyword id="KW-0472">Membrane</keyword>
<keyword id="KW-0539">Nucleus</keyword>
<keyword id="KW-0597">Phosphoprotein</keyword>
<keyword id="KW-0645">Protease</keyword>
<keyword id="KW-1267">Proteomics identification</keyword>
<keyword id="KW-1185">Reference proteome</keyword>
<keyword id="KW-0729">SH3-binding</keyword>
<keyword id="KW-0788">Thiol protease</keyword>
<keyword id="KW-0832">Ubl conjugation</keyword>
<keyword id="KW-0833">Ubl conjugation pathway</keyword>
<organism>
    <name type="scientific">Homo sapiens</name>
    <name type="common">Human</name>
    <dbReference type="NCBI Taxonomy" id="9606"/>
    <lineage>
        <taxon>Eukaryota</taxon>
        <taxon>Metazoa</taxon>
        <taxon>Chordata</taxon>
        <taxon>Craniata</taxon>
        <taxon>Vertebrata</taxon>
        <taxon>Euteleostomi</taxon>
        <taxon>Mammalia</taxon>
        <taxon>Eutheria</taxon>
        <taxon>Euarchontoglires</taxon>
        <taxon>Primates</taxon>
        <taxon>Haplorrhini</taxon>
        <taxon>Catarrhini</taxon>
        <taxon>Hominidae</taxon>
        <taxon>Homo</taxon>
    </lineage>
</organism>
<dbReference type="EC" id="3.4.19.12" evidence="17"/>
<dbReference type="EMBL" id="D29956">
    <property type="protein sequence ID" value="BAA06225.2"/>
    <property type="molecule type" value="mRNA"/>
</dbReference>
<dbReference type="EMBL" id="AK296480">
    <property type="protein sequence ID" value="BAG59120.1"/>
    <property type="molecule type" value="mRNA"/>
</dbReference>
<dbReference type="EMBL" id="BX537420">
    <property type="protein sequence ID" value="CAD97662.1"/>
    <property type="molecule type" value="mRNA"/>
</dbReference>
<dbReference type="EMBL" id="AC012170">
    <property type="status" value="NOT_ANNOTATED_CDS"/>
    <property type="molecule type" value="Genomic_DNA"/>
</dbReference>
<dbReference type="EMBL" id="BC038801">
    <property type="protein sequence ID" value="AAH38801.1"/>
    <property type="status" value="ALT_SEQ"/>
    <property type="molecule type" value="mRNA"/>
</dbReference>
<dbReference type="EMBL" id="BC051345">
    <property type="protein sequence ID" value="AAH51345.1"/>
    <property type="status" value="ALT_SEQ"/>
    <property type="molecule type" value="mRNA"/>
</dbReference>
<dbReference type="EMBL" id="BC110590">
    <property type="protein sequence ID" value="AAI10591.1"/>
    <property type="molecule type" value="mRNA"/>
</dbReference>
<dbReference type="CCDS" id="CCDS10137.1">
    <molecule id="P40818-1"/>
</dbReference>
<dbReference type="CCDS" id="CCDS61632.1">
    <molecule id="P40818-2"/>
</dbReference>
<dbReference type="RefSeq" id="NP_001122082.1">
    <molecule id="P40818-1"/>
    <property type="nucleotide sequence ID" value="NM_001128610.3"/>
</dbReference>
<dbReference type="RefSeq" id="NP_001269978.1">
    <molecule id="P40818-2"/>
    <property type="nucleotide sequence ID" value="NM_001283049.2"/>
</dbReference>
<dbReference type="RefSeq" id="NP_005145.3">
    <molecule id="P40818-1"/>
    <property type="nucleotide sequence ID" value="NM_005154.4"/>
</dbReference>
<dbReference type="RefSeq" id="XP_006720824.1">
    <property type="nucleotide sequence ID" value="XM_006720761.3"/>
</dbReference>
<dbReference type="RefSeq" id="XP_011520495.1">
    <property type="nucleotide sequence ID" value="XM_011522193.2"/>
</dbReference>
<dbReference type="PDB" id="1WHB">
    <property type="method" value="NMR"/>
    <property type="chains" value="A=174-317"/>
</dbReference>
<dbReference type="PDB" id="2A9U">
    <property type="method" value="X-ray"/>
    <property type="resolution" value="2.10 A"/>
    <property type="chains" value="A/B=1-142"/>
</dbReference>
<dbReference type="PDB" id="2GFO">
    <property type="method" value="X-ray"/>
    <property type="resolution" value="2.00 A"/>
    <property type="chains" value="A=734-1110"/>
</dbReference>
<dbReference type="PDB" id="2GWF">
    <property type="method" value="X-ray"/>
    <property type="resolution" value="2.30 A"/>
    <property type="chains" value="A/C/E=181-318"/>
</dbReference>
<dbReference type="PDB" id="3N3K">
    <property type="method" value="X-ray"/>
    <property type="resolution" value="2.60 A"/>
    <property type="chains" value="A=734-1110"/>
</dbReference>
<dbReference type="PDB" id="6F09">
    <property type="method" value="X-ray"/>
    <property type="resolution" value="1.59 A"/>
    <property type="chains" value="A/B/C/D=712-724"/>
</dbReference>
<dbReference type="PDB" id="8ADM">
    <property type="method" value="X-ray"/>
    <property type="resolution" value="1.70 A"/>
    <property type="chains" value="P=715-722"/>
</dbReference>
<dbReference type="PDB" id="8XPN">
    <property type="method" value="X-ray"/>
    <property type="resolution" value="2.10 A"/>
    <property type="chains" value="A/B/C=734-1110"/>
</dbReference>
<dbReference type="PDB" id="8Y9A">
    <property type="method" value="X-ray"/>
    <property type="resolution" value="3.10 A"/>
    <property type="chains" value="A=1-142"/>
</dbReference>
<dbReference type="PDBsum" id="1WHB"/>
<dbReference type="PDBsum" id="2A9U"/>
<dbReference type="PDBsum" id="2GFO"/>
<dbReference type="PDBsum" id="2GWF"/>
<dbReference type="PDBsum" id="3N3K"/>
<dbReference type="PDBsum" id="6F09"/>
<dbReference type="PDBsum" id="8ADM"/>
<dbReference type="PDBsum" id="8XPN"/>
<dbReference type="PDBsum" id="8Y9A"/>
<dbReference type="SASBDB" id="P40818"/>
<dbReference type="SMR" id="P40818"/>
<dbReference type="BioGRID" id="114555">
    <property type="interactions" value="162"/>
</dbReference>
<dbReference type="CORUM" id="P40818"/>
<dbReference type="DIP" id="DIP-40365N"/>
<dbReference type="FunCoup" id="P40818">
    <property type="interactions" value="2457"/>
</dbReference>
<dbReference type="IntAct" id="P40818">
    <property type="interactions" value="55"/>
</dbReference>
<dbReference type="MINT" id="P40818"/>
<dbReference type="STRING" id="9606.ENSP00000379721"/>
<dbReference type="BindingDB" id="P40818"/>
<dbReference type="ChEMBL" id="CHEMBL2157854"/>
<dbReference type="GuidetoPHARMACOLOGY" id="3209"/>
<dbReference type="MEROPS" id="C19.011"/>
<dbReference type="GlyGen" id="P40818">
    <property type="glycosylation" value="3 sites, 1 O-linked glycan (2 sites)"/>
</dbReference>
<dbReference type="iPTMnet" id="P40818"/>
<dbReference type="MetOSite" id="P40818"/>
<dbReference type="PhosphoSitePlus" id="P40818"/>
<dbReference type="SwissPalm" id="P40818"/>
<dbReference type="BioMuta" id="USP8"/>
<dbReference type="DMDM" id="731046"/>
<dbReference type="CPTAC" id="CPTAC-1733"/>
<dbReference type="CPTAC" id="CPTAC-1734"/>
<dbReference type="jPOST" id="P40818"/>
<dbReference type="MassIVE" id="P40818"/>
<dbReference type="PaxDb" id="9606-ENSP00000379721"/>
<dbReference type="PeptideAtlas" id="P40818"/>
<dbReference type="ProteomicsDB" id="4442"/>
<dbReference type="ProteomicsDB" id="55380">
    <molecule id="P40818-1"/>
</dbReference>
<dbReference type="Pumba" id="P40818"/>
<dbReference type="Antibodypedia" id="1385">
    <property type="antibodies" value="275 antibodies from 28 providers"/>
</dbReference>
<dbReference type="DNASU" id="9101"/>
<dbReference type="Ensembl" id="ENST00000307179.9">
    <molecule id="P40818-1"/>
    <property type="protein sequence ID" value="ENSP00000302239.4"/>
    <property type="gene ID" value="ENSG00000138592.14"/>
</dbReference>
<dbReference type="Ensembl" id="ENST00000396444.7">
    <molecule id="P40818-1"/>
    <property type="protein sequence ID" value="ENSP00000379721.3"/>
    <property type="gene ID" value="ENSG00000138592.14"/>
</dbReference>
<dbReference type="Ensembl" id="ENST00000425032.7">
    <molecule id="P40818-2"/>
    <property type="protein sequence ID" value="ENSP00000412682.3"/>
    <property type="gene ID" value="ENSG00000138592.14"/>
</dbReference>
<dbReference type="GeneID" id="9101"/>
<dbReference type="KEGG" id="hsa:9101"/>
<dbReference type="MANE-Select" id="ENST00000307179.9">
    <property type="protein sequence ID" value="ENSP00000302239.4"/>
    <property type="RefSeq nucleotide sequence ID" value="NM_005154.5"/>
    <property type="RefSeq protein sequence ID" value="NP_005145.3"/>
</dbReference>
<dbReference type="UCSC" id="uc001zyl.6">
    <molecule id="P40818-1"/>
    <property type="organism name" value="human"/>
</dbReference>
<dbReference type="AGR" id="HGNC:12631"/>
<dbReference type="CTD" id="9101"/>
<dbReference type="DisGeNET" id="9101"/>
<dbReference type="GeneCards" id="USP8"/>
<dbReference type="HGNC" id="HGNC:12631">
    <property type="gene designation" value="USP8"/>
</dbReference>
<dbReference type="HPA" id="ENSG00000138592">
    <property type="expression patterns" value="Low tissue specificity"/>
</dbReference>
<dbReference type="MalaCards" id="USP8"/>
<dbReference type="MIM" id="219090">
    <property type="type" value="phenotype"/>
</dbReference>
<dbReference type="MIM" id="603158">
    <property type="type" value="gene"/>
</dbReference>
<dbReference type="neXtProt" id="NX_P40818"/>
<dbReference type="OpenTargets" id="ENSG00000138592"/>
<dbReference type="Orphanet" id="401795">
    <property type="disease" value="Autosomal recessive spastic paraplegia type 59"/>
</dbReference>
<dbReference type="Orphanet" id="96253">
    <property type="disease" value="Cushing disease"/>
</dbReference>
<dbReference type="PharmGKB" id="PA37256"/>
<dbReference type="VEuPathDB" id="HostDB:ENSG00000138592"/>
<dbReference type="eggNOG" id="KOG1868">
    <property type="taxonomic scope" value="Eukaryota"/>
</dbReference>
<dbReference type="GeneTree" id="ENSGT00940000157542"/>
<dbReference type="HOGENOM" id="CLU_009980_0_0_1"/>
<dbReference type="InParanoid" id="P40818"/>
<dbReference type="OMA" id="YKYDDHE"/>
<dbReference type="OrthoDB" id="292964at2759"/>
<dbReference type="PAN-GO" id="P40818">
    <property type="GO annotations" value="11 GO annotations based on evolutionary models"/>
</dbReference>
<dbReference type="PhylomeDB" id="P40818"/>
<dbReference type="TreeFam" id="TF106277"/>
<dbReference type="BRENDA" id="3.4.19.12">
    <property type="organism ID" value="2681"/>
</dbReference>
<dbReference type="PathwayCommons" id="P40818"/>
<dbReference type="Reactome" id="R-HSA-1358803">
    <property type="pathway name" value="Downregulation of ERBB2:ERBB3 signaling"/>
</dbReference>
<dbReference type="Reactome" id="R-HSA-4641263">
    <property type="pathway name" value="Regulation of FZD by ubiquitination"/>
</dbReference>
<dbReference type="Reactome" id="R-HSA-5689880">
    <property type="pathway name" value="Ub-specific processing proteases"/>
</dbReference>
<dbReference type="Reactome" id="R-HSA-6807004">
    <property type="pathway name" value="Negative regulation of MET activity"/>
</dbReference>
<dbReference type="SignaLink" id="P40818"/>
<dbReference type="SIGNOR" id="P40818"/>
<dbReference type="BioGRID-ORCS" id="9101">
    <property type="hits" value="564 hits in 1172 CRISPR screens"/>
</dbReference>
<dbReference type="ChiTaRS" id="USP8">
    <property type="organism name" value="human"/>
</dbReference>
<dbReference type="EvolutionaryTrace" id="P40818"/>
<dbReference type="GeneWiki" id="USP8"/>
<dbReference type="GenomeRNAi" id="9101"/>
<dbReference type="Pharos" id="P40818">
    <property type="development level" value="Tchem"/>
</dbReference>
<dbReference type="PRO" id="PR:P40818"/>
<dbReference type="Proteomes" id="UP000005640">
    <property type="component" value="Chromosome 15"/>
</dbReference>
<dbReference type="RNAct" id="P40818">
    <property type="molecule type" value="protein"/>
</dbReference>
<dbReference type="Bgee" id="ENSG00000138592">
    <property type="expression patterns" value="Expressed in calcaneal tendon and 195 other cell types or tissues"/>
</dbReference>
<dbReference type="ExpressionAtlas" id="P40818">
    <property type="expression patterns" value="baseline and differential"/>
</dbReference>
<dbReference type="GO" id="GO:0002080">
    <property type="term" value="C:acrosomal membrane"/>
    <property type="evidence" value="ECO:0007669"/>
    <property type="project" value="Ensembl"/>
</dbReference>
<dbReference type="GO" id="GO:0005737">
    <property type="term" value="C:cytoplasm"/>
    <property type="evidence" value="ECO:0000314"/>
    <property type="project" value="MGI"/>
</dbReference>
<dbReference type="GO" id="GO:0005829">
    <property type="term" value="C:cytosol"/>
    <property type="evidence" value="ECO:0000314"/>
    <property type="project" value="UniProtKB"/>
</dbReference>
<dbReference type="GO" id="GO:0005769">
    <property type="term" value="C:early endosome"/>
    <property type="evidence" value="ECO:0000314"/>
    <property type="project" value="UniProtKB"/>
</dbReference>
<dbReference type="GO" id="GO:0010008">
    <property type="term" value="C:endosome membrane"/>
    <property type="evidence" value="ECO:0007669"/>
    <property type="project" value="UniProtKB-SubCell"/>
</dbReference>
<dbReference type="GO" id="GO:0098978">
    <property type="term" value="C:glutamatergic synapse"/>
    <property type="evidence" value="ECO:0007669"/>
    <property type="project" value="Ensembl"/>
</dbReference>
<dbReference type="GO" id="GO:0030496">
    <property type="term" value="C:midbody"/>
    <property type="evidence" value="ECO:0000314"/>
    <property type="project" value="MGI"/>
</dbReference>
<dbReference type="GO" id="GO:0005634">
    <property type="term" value="C:nucleus"/>
    <property type="evidence" value="ECO:0007669"/>
    <property type="project" value="UniProtKB-SubCell"/>
</dbReference>
<dbReference type="GO" id="GO:0005886">
    <property type="term" value="C:plasma membrane"/>
    <property type="evidence" value="ECO:0007669"/>
    <property type="project" value="UniProtKB-SubCell"/>
</dbReference>
<dbReference type="GO" id="GO:0014069">
    <property type="term" value="C:postsynaptic density"/>
    <property type="evidence" value="ECO:0000318"/>
    <property type="project" value="GO_Central"/>
</dbReference>
<dbReference type="GO" id="GO:0045296">
    <property type="term" value="F:cadherin binding"/>
    <property type="evidence" value="ECO:0007005"/>
    <property type="project" value="BHF-UCL"/>
</dbReference>
<dbReference type="GO" id="GO:0004843">
    <property type="term" value="F:cysteine-type deubiquitinase activity"/>
    <property type="evidence" value="ECO:0000314"/>
    <property type="project" value="UniProtKB"/>
</dbReference>
<dbReference type="GO" id="GO:0004197">
    <property type="term" value="F:cysteine-type endopeptidase activity"/>
    <property type="evidence" value="ECO:0000304"/>
    <property type="project" value="ProtInc"/>
</dbReference>
<dbReference type="GO" id="GO:1990380">
    <property type="term" value="F:K48-linked deubiquitinase activity"/>
    <property type="evidence" value="ECO:0000314"/>
    <property type="project" value="UniProtKB"/>
</dbReference>
<dbReference type="GO" id="GO:0061578">
    <property type="term" value="F:K63-linked deubiquitinase activity"/>
    <property type="evidence" value="ECO:0000314"/>
    <property type="project" value="UniProtKB"/>
</dbReference>
<dbReference type="GO" id="GO:0017124">
    <property type="term" value="F:SH3 domain binding"/>
    <property type="evidence" value="ECO:0007669"/>
    <property type="project" value="UniProtKB-KW"/>
</dbReference>
<dbReference type="GO" id="GO:0071549">
    <property type="term" value="P:cellular response to dexamethasone stimulus"/>
    <property type="evidence" value="ECO:0007669"/>
    <property type="project" value="Ensembl"/>
</dbReference>
<dbReference type="GO" id="GO:1990090">
    <property type="term" value="P:cellular response to nerve growth factor stimulus"/>
    <property type="evidence" value="ECO:0007669"/>
    <property type="project" value="Ensembl"/>
</dbReference>
<dbReference type="GO" id="GO:0007032">
    <property type="term" value="P:endosome organization"/>
    <property type="evidence" value="ECO:0000318"/>
    <property type="project" value="GO_Central"/>
</dbReference>
<dbReference type="GO" id="GO:0000281">
    <property type="term" value="P:mitotic cytokinesis"/>
    <property type="evidence" value="ECO:0000315"/>
    <property type="project" value="MGI"/>
</dbReference>
<dbReference type="GO" id="GO:1905166">
    <property type="term" value="P:negative regulation of lysosomal protein catabolic process"/>
    <property type="evidence" value="ECO:0000315"/>
    <property type="project" value="FlyBase"/>
</dbReference>
<dbReference type="GO" id="GO:1905908">
    <property type="term" value="P:positive regulation of amyloid fibril formation"/>
    <property type="evidence" value="ECO:0000315"/>
    <property type="project" value="FlyBase"/>
</dbReference>
<dbReference type="GO" id="GO:0090263">
    <property type="term" value="P:positive regulation of canonical Wnt signaling pathway"/>
    <property type="evidence" value="ECO:0000315"/>
    <property type="project" value="FlyBase"/>
</dbReference>
<dbReference type="GO" id="GO:0016579">
    <property type="term" value="P:protein deubiquitination"/>
    <property type="evidence" value="ECO:0000315"/>
    <property type="project" value="UniProtKB"/>
</dbReference>
<dbReference type="GO" id="GO:0071108">
    <property type="term" value="P:protein K48-linked deubiquitination"/>
    <property type="evidence" value="ECO:0000314"/>
    <property type="project" value="UniProtKB"/>
</dbReference>
<dbReference type="GO" id="GO:0070536">
    <property type="term" value="P:protein K63-linked deubiquitination"/>
    <property type="evidence" value="ECO:0000314"/>
    <property type="project" value="UniProtKB"/>
</dbReference>
<dbReference type="GO" id="GO:0006508">
    <property type="term" value="P:proteolysis"/>
    <property type="evidence" value="ECO:0007669"/>
    <property type="project" value="UniProtKB-KW"/>
</dbReference>
<dbReference type="GO" id="GO:0007265">
    <property type="term" value="P:Ras protein signal transduction"/>
    <property type="evidence" value="ECO:0000318"/>
    <property type="project" value="GO_Central"/>
</dbReference>
<dbReference type="GO" id="GO:0099576">
    <property type="term" value="P:regulation of protein catabolic process at postsynapse, modulating synaptic transmission"/>
    <property type="evidence" value="ECO:0007669"/>
    <property type="project" value="Ensembl"/>
</dbReference>
<dbReference type="GO" id="GO:0032880">
    <property type="term" value="P:regulation of protein localization"/>
    <property type="evidence" value="ECO:0000315"/>
    <property type="project" value="UniProtKB"/>
</dbReference>
<dbReference type="GO" id="GO:0031647">
    <property type="term" value="P:regulation of protein stability"/>
    <property type="evidence" value="ECO:0000315"/>
    <property type="project" value="UniProtKB"/>
</dbReference>
<dbReference type="CDD" id="cd02674">
    <property type="entry name" value="Peptidase_C19R"/>
    <property type="match status" value="1"/>
</dbReference>
<dbReference type="FunFam" id="3.90.70.10:FF:000025">
    <property type="entry name" value="Putative ubiquitin carboxyl-terminal hydrolase 8"/>
    <property type="match status" value="1"/>
</dbReference>
<dbReference type="FunFam" id="1.20.58.80:FF:000011">
    <property type="entry name" value="Ubiquitin carboxyl-terminal hydrolase 8"/>
    <property type="match status" value="1"/>
</dbReference>
<dbReference type="FunFam" id="3.40.250.10:FF:000017">
    <property type="entry name" value="ubiquitin carboxyl-terminal hydrolase 8"/>
    <property type="match status" value="1"/>
</dbReference>
<dbReference type="Gene3D" id="3.90.70.10">
    <property type="entry name" value="Cysteine proteinases"/>
    <property type="match status" value="1"/>
</dbReference>
<dbReference type="Gene3D" id="1.20.58.80">
    <property type="entry name" value="Phosphotransferase system, lactose/cellobiose-type IIA subunit"/>
    <property type="match status" value="1"/>
</dbReference>
<dbReference type="Gene3D" id="3.40.250.10">
    <property type="entry name" value="Rhodanese-like domain"/>
    <property type="match status" value="1"/>
</dbReference>
<dbReference type="InterPro" id="IPR038765">
    <property type="entry name" value="Papain-like_cys_pep_sf"/>
</dbReference>
<dbReference type="InterPro" id="IPR001394">
    <property type="entry name" value="Peptidase_C19_UCH"/>
</dbReference>
<dbReference type="InterPro" id="IPR001763">
    <property type="entry name" value="Rhodanese-like_dom"/>
</dbReference>
<dbReference type="InterPro" id="IPR036873">
    <property type="entry name" value="Rhodanese-like_dom_sf"/>
</dbReference>
<dbReference type="InterPro" id="IPR050185">
    <property type="entry name" value="Ub_carboxyl-term_hydrolase"/>
</dbReference>
<dbReference type="InterPro" id="IPR015063">
    <property type="entry name" value="USP8_dimer"/>
</dbReference>
<dbReference type="InterPro" id="IPR018200">
    <property type="entry name" value="USP_CS"/>
</dbReference>
<dbReference type="InterPro" id="IPR028889">
    <property type="entry name" value="USP_dom"/>
</dbReference>
<dbReference type="InterPro" id="IPR048498">
    <property type="entry name" value="WW_USP8"/>
</dbReference>
<dbReference type="PANTHER" id="PTHR21646">
    <property type="entry name" value="UBIQUITIN CARBOXYL-TERMINAL HYDROLASE"/>
    <property type="match status" value="1"/>
</dbReference>
<dbReference type="PANTHER" id="PTHR21646:SF27">
    <property type="entry name" value="UBIQUITIN CARBOXYL-TERMINAL HYDROLASE 8"/>
    <property type="match status" value="1"/>
</dbReference>
<dbReference type="Pfam" id="PF00581">
    <property type="entry name" value="Rhodanese"/>
    <property type="match status" value="1"/>
</dbReference>
<dbReference type="Pfam" id="PF00443">
    <property type="entry name" value="UCH"/>
    <property type="match status" value="1"/>
</dbReference>
<dbReference type="Pfam" id="PF08969">
    <property type="entry name" value="USP8_dimer"/>
    <property type="match status" value="1"/>
</dbReference>
<dbReference type="Pfam" id="PF20625">
    <property type="entry name" value="WW_USP8"/>
    <property type="match status" value="1"/>
</dbReference>
<dbReference type="SUPFAM" id="SSF54001">
    <property type="entry name" value="Cysteine proteinases"/>
    <property type="match status" value="1"/>
</dbReference>
<dbReference type="SUPFAM" id="SSF52821">
    <property type="entry name" value="Rhodanese/Cell cycle control phosphatase"/>
    <property type="match status" value="1"/>
</dbReference>
<dbReference type="SUPFAM" id="SSF140856">
    <property type="entry name" value="USP8 N-terminal domain-like"/>
    <property type="match status" value="1"/>
</dbReference>
<dbReference type="PROSITE" id="PS50206">
    <property type="entry name" value="RHODANESE_3"/>
    <property type="match status" value="1"/>
</dbReference>
<dbReference type="PROSITE" id="PS00972">
    <property type="entry name" value="USP_1"/>
    <property type="match status" value="1"/>
</dbReference>
<dbReference type="PROSITE" id="PS00973">
    <property type="entry name" value="USP_2"/>
    <property type="match status" value="1"/>
</dbReference>
<dbReference type="PROSITE" id="PS50235">
    <property type="entry name" value="USP_3"/>
    <property type="match status" value="1"/>
</dbReference>
<evidence type="ECO:0000250" key="1"/>
<evidence type="ECO:0000250" key="2">
    <source>
        <dbReference type="UniProtKB" id="Q80U87"/>
    </source>
</evidence>
<evidence type="ECO:0000255" key="3">
    <source>
        <dbReference type="PROSITE-ProRule" id="PRU00173"/>
    </source>
</evidence>
<evidence type="ECO:0000255" key="4">
    <source>
        <dbReference type="PROSITE-ProRule" id="PRU10092"/>
    </source>
</evidence>
<evidence type="ECO:0000255" key="5">
    <source>
        <dbReference type="PROSITE-ProRule" id="PRU10093"/>
    </source>
</evidence>
<evidence type="ECO:0000256" key="6">
    <source>
        <dbReference type="SAM" id="MobiDB-lite"/>
    </source>
</evidence>
<evidence type="ECO:0000269" key="7">
    <source>
    </source>
</evidence>
<evidence type="ECO:0000269" key="8">
    <source>
    </source>
</evidence>
<evidence type="ECO:0000269" key="9">
    <source>
    </source>
</evidence>
<evidence type="ECO:0000269" key="10">
    <source>
    </source>
</evidence>
<evidence type="ECO:0000269" key="11">
    <source>
    </source>
</evidence>
<evidence type="ECO:0000269" key="12">
    <source>
    </source>
</evidence>
<evidence type="ECO:0000269" key="13">
    <source>
    </source>
</evidence>
<evidence type="ECO:0000269" key="14">
    <source>
    </source>
</evidence>
<evidence type="ECO:0000269" key="15">
    <source>
    </source>
</evidence>
<evidence type="ECO:0000269" key="16">
    <source>
    </source>
</evidence>
<evidence type="ECO:0000269" key="17">
    <source>
    </source>
</evidence>
<evidence type="ECO:0000303" key="18">
    <source>
    </source>
</evidence>
<evidence type="ECO:0000305" key="19"/>
<evidence type="ECO:0000312" key="20">
    <source>
        <dbReference type="HGNC" id="HGNC:12631"/>
    </source>
</evidence>
<evidence type="ECO:0007744" key="21">
    <source>
    </source>
</evidence>
<evidence type="ECO:0007744" key="22">
    <source>
    </source>
</evidence>
<evidence type="ECO:0007744" key="23">
    <source>
    </source>
</evidence>
<evidence type="ECO:0007744" key="24">
    <source>
    </source>
</evidence>
<evidence type="ECO:0007829" key="25">
    <source>
        <dbReference type="PDB" id="1WHB"/>
    </source>
</evidence>
<evidence type="ECO:0007829" key="26">
    <source>
        <dbReference type="PDB" id="2A9U"/>
    </source>
</evidence>
<evidence type="ECO:0007829" key="27">
    <source>
        <dbReference type="PDB" id="2GFO"/>
    </source>
</evidence>
<evidence type="ECO:0007829" key="28">
    <source>
        <dbReference type="PDB" id="2GWF"/>
    </source>
</evidence>
<evidence type="ECO:0007829" key="29">
    <source>
        <dbReference type="PDB" id="8XPN"/>
    </source>
</evidence>
<accession>P40818</accession>
<accession>B4DKA8</accession>
<accession>Q2TB31</accession>
<accession>Q7Z3U2</accession>
<accession>Q86VA0</accession>
<accession>Q8IWI7</accession>
<sequence length="1118" mass="127523">MPAVASVPKELYLSSSLKDLNKKTEVKPEKISTKSYVHSALKIFKTAEECRLDRDEERAYVLYMKYVTVYNLIKKRPDFKQQQDYFHSILGPGNIKKAVEEAERLSESLKLRYEEAEVRKKLEEKDRQEEAQRLQQKRQETGREDGGTLAKGSLENVLDSKDKTQKSNGEKNEKCETKEKGAITAKELYTMMTDKNISLIIMDARRMQDYQDSCILHSLSVPEEAISPGVTASWIEAHLPDDSKDTWKKRGNVEYVVLLDWFSSAKDLQIGTTLRSLKDALFKWESKTVLRNEPLVLEGGYENWLLCYPQYTTNAKVTPPPRRQNEEVSISLDFTYPSLEESIPSKPAAQTPPASIEVDENIELISGQNERMGPLNISTPVEPVAASKSDVSPIIQPVPSIKNVPQIDRTKKPAVKLPEEHRIKSESTNHEQQSPQSGKVIPDRSTKPVVFSPTLMLTDEEKARIHAETALLMEKNKQEKELRERQQEEQKEKLRKEEQEQKAKKKQEAEENEITEKQQKAKEEMEKKESEQAKKEDKETSAKRGKEITGVKRQSKSEHETSDAKKSVEDRGKRCPTPEIQKKSTGDVPHTSVTGDSGSGKPFKIKGQPESGILRTGTFREDTDDTERNKAQREPLTRARSEEMGRIVPGLPSGWAKFLDPITGTFRYYHSPTNTVHMYPPEMAPSSAPPSTPPTHKAKPQIPAERDREPSKLKRSYSSPDITQAIQEEEKRKPTVTPTVNRENKPTCYPKAEISRLSASQIRNLNPVFGGSGPALTGLRNLGNTCYMNSILQCLCNAPHLADYFNRNCYQDDINRSNLLGHKGEVAEEFGIIMKALWTGQYRYISPKDFKITIGKINDQFAGYSQQDSQELLLFLMDGLHEDLNKADNRKRYKEENNDHLDDFKAAEHAWQKHKQLNESIIVALFQGQFKSTVQCLTCHKKSRTFEAFMYLSLPLASTSKCTLQDCLRLFSKEEKLTDNNRFYCSHCRARRDSLKKIEIWKLPPVLLVHLKRFSYDGRWKQKLQTSVDFPLENLDLSQYVIGPKNNLKKYNLFSVSNHYGGLDGGHYTAYCKNAARQRWFKFDDHEVSDISVSSVKSSAAYILFYTSLGPRVTDVAT</sequence>
<gene>
    <name evidence="20" type="primary">USP8</name>
    <name type="synonym">KIAA0055</name>
    <name type="synonym">UBPY</name>
</gene>